<feature type="chain" id="PRO_0000138031" description="Glycerol-3-phosphate dehydrogenase [NAD(P)+]">
    <location>
        <begin position="1"/>
        <end position="332"/>
    </location>
</feature>
<feature type="active site" description="Proton acceptor" evidence="1">
    <location>
        <position position="192"/>
    </location>
</feature>
<feature type="binding site" evidence="1">
    <location>
        <position position="11"/>
    </location>
    <ligand>
        <name>NADPH</name>
        <dbReference type="ChEBI" id="CHEBI:57783"/>
    </ligand>
</feature>
<feature type="binding site" evidence="1">
    <location>
        <position position="12"/>
    </location>
    <ligand>
        <name>NADPH</name>
        <dbReference type="ChEBI" id="CHEBI:57783"/>
    </ligand>
</feature>
<feature type="binding site" evidence="1">
    <location>
        <position position="32"/>
    </location>
    <ligand>
        <name>NADPH</name>
        <dbReference type="ChEBI" id="CHEBI:57783"/>
    </ligand>
</feature>
<feature type="binding site" evidence="1">
    <location>
        <position position="106"/>
    </location>
    <ligand>
        <name>NADPH</name>
        <dbReference type="ChEBI" id="CHEBI:57783"/>
    </ligand>
</feature>
<feature type="binding site" evidence="1">
    <location>
        <position position="106"/>
    </location>
    <ligand>
        <name>sn-glycerol 3-phosphate</name>
        <dbReference type="ChEBI" id="CHEBI:57597"/>
    </ligand>
</feature>
<feature type="binding site" evidence="1">
    <location>
        <position position="137"/>
    </location>
    <ligand>
        <name>sn-glycerol 3-phosphate</name>
        <dbReference type="ChEBI" id="CHEBI:57597"/>
    </ligand>
</feature>
<feature type="binding site" evidence="1">
    <location>
        <position position="139"/>
    </location>
    <ligand>
        <name>sn-glycerol 3-phosphate</name>
        <dbReference type="ChEBI" id="CHEBI:57597"/>
    </ligand>
</feature>
<feature type="binding site" evidence="1">
    <location>
        <position position="141"/>
    </location>
    <ligand>
        <name>NADPH</name>
        <dbReference type="ChEBI" id="CHEBI:57783"/>
    </ligand>
</feature>
<feature type="binding site" evidence="1">
    <location>
        <position position="192"/>
    </location>
    <ligand>
        <name>sn-glycerol 3-phosphate</name>
        <dbReference type="ChEBI" id="CHEBI:57597"/>
    </ligand>
</feature>
<feature type="binding site" evidence="1">
    <location>
        <position position="245"/>
    </location>
    <ligand>
        <name>sn-glycerol 3-phosphate</name>
        <dbReference type="ChEBI" id="CHEBI:57597"/>
    </ligand>
</feature>
<feature type="binding site" evidence="1">
    <location>
        <position position="255"/>
    </location>
    <ligand>
        <name>sn-glycerol 3-phosphate</name>
        <dbReference type="ChEBI" id="CHEBI:57597"/>
    </ligand>
</feature>
<feature type="binding site" evidence="1">
    <location>
        <position position="256"/>
    </location>
    <ligand>
        <name>NADPH</name>
        <dbReference type="ChEBI" id="CHEBI:57783"/>
    </ligand>
</feature>
<feature type="binding site" evidence="1">
    <location>
        <position position="256"/>
    </location>
    <ligand>
        <name>sn-glycerol 3-phosphate</name>
        <dbReference type="ChEBI" id="CHEBI:57597"/>
    </ligand>
</feature>
<feature type="binding site" evidence="1">
    <location>
        <position position="257"/>
    </location>
    <ligand>
        <name>sn-glycerol 3-phosphate</name>
        <dbReference type="ChEBI" id="CHEBI:57597"/>
    </ligand>
</feature>
<feature type="binding site" evidence="1">
    <location>
        <position position="280"/>
    </location>
    <ligand>
        <name>NADPH</name>
        <dbReference type="ChEBI" id="CHEBI:57783"/>
    </ligand>
</feature>
<feature type="binding site" evidence="1">
    <location>
        <position position="282"/>
    </location>
    <ligand>
        <name>NADPH</name>
        <dbReference type="ChEBI" id="CHEBI:57783"/>
    </ligand>
</feature>
<keyword id="KW-0963">Cytoplasm</keyword>
<keyword id="KW-0444">Lipid biosynthesis</keyword>
<keyword id="KW-0443">Lipid metabolism</keyword>
<keyword id="KW-0520">NAD</keyword>
<keyword id="KW-0521">NADP</keyword>
<keyword id="KW-0547">Nucleotide-binding</keyword>
<keyword id="KW-0560">Oxidoreductase</keyword>
<keyword id="KW-0594">Phospholipid biosynthesis</keyword>
<keyword id="KW-1208">Phospholipid metabolism</keyword>
<gene>
    <name evidence="1" type="primary">gpsA</name>
    <name type="ordered locus">SH1437</name>
</gene>
<evidence type="ECO:0000255" key="1">
    <source>
        <dbReference type="HAMAP-Rule" id="MF_00394"/>
    </source>
</evidence>
<organism>
    <name type="scientific">Staphylococcus haemolyticus (strain JCSC1435)</name>
    <dbReference type="NCBI Taxonomy" id="279808"/>
    <lineage>
        <taxon>Bacteria</taxon>
        <taxon>Bacillati</taxon>
        <taxon>Bacillota</taxon>
        <taxon>Bacilli</taxon>
        <taxon>Bacillales</taxon>
        <taxon>Staphylococcaceae</taxon>
        <taxon>Staphylococcus</taxon>
    </lineage>
</organism>
<sequence length="332" mass="36188">MTKITVFGMGSFGTALANVLAENGHTVLMWGKNEDSVKELNDHHQNKRYLKDVVLDSRIKATSDIKEAANFTDIYLMALPTKAMREVTSEIDSLIDSKKTFIHVAKGIENDTFKRVSEMIEDSISEDHNGGIGVLSGPSHAEEVVIKQPTTVAASSKDEKVSKLIQDLFMNDYLRVYTNNDLVGVELGGALKNIIAVASGIVAGMGYGDNAKAALMTRGLAEISRLGEKLGADPMTFLGLGGIGDLIVTCTSTHSRNYTLGFKLGQGQTMDEALNEMNMVVEGIYTTNSVYHLAKQQNVDMPITNALYKVLFEDNPVKDSVKDLMGRDKKSE</sequence>
<comment type="function">
    <text evidence="1">Catalyzes the reduction of the glycolytic intermediate dihydroxyacetone phosphate (DHAP) to sn-glycerol 3-phosphate (G3P), the key precursor for phospholipid synthesis.</text>
</comment>
<comment type="catalytic activity">
    <reaction evidence="1">
        <text>sn-glycerol 3-phosphate + NAD(+) = dihydroxyacetone phosphate + NADH + H(+)</text>
        <dbReference type="Rhea" id="RHEA:11092"/>
        <dbReference type="ChEBI" id="CHEBI:15378"/>
        <dbReference type="ChEBI" id="CHEBI:57540"/>
        <dbReference type="ChEBI" id="CHEBI:57597"/>
        <dbReference type="ChEBI" id="CHEBI:57642"/>
        <dbReference type="ChEBI" id="CHEBI:57945"/>
        <dbReference type="EC" id="1.1.1.94"/>
    </reaction>
    <physiologicalReaction direction="right-to-left" evidence="1">
        <dbReference type="Rhea" id="RHEA:11094"/>
    </physiologicalReaction>
</comment>
<comment type="catalytic activity">
    <reaction evidence="1">
        <text>sn-glycerol 3-phosphate + NADP(+) = dihydroxyacetone phosphate + NADPH + H(+)</text>
        <dbReference type="Rhea" id="RHEA:11096"/>
        <dbReference type="ChEBI" id="CHEBI:15378"/>
        <dbReference type="ChEBI" id="CHEBI:57597"/>
        <dbReference type="ChEBI" id="CHEBI:57642"/>
        <dbReference type="ChEBI" id="CHEBI:57783"/>
        <dbReference type="ChEBI" id="CHEBI:58349"/>
        <dbReference type="EC" id="1.1.1.94"/>
    </reaction>
    <physiologicalReaction direction="right-to-left" evidence="1">
        <dbReference type="Rhea" id="RHEA:11098"/>
    </physiologicalReaction>
</comment>
<comment type="pathway">
    <text evidence="1">Membrane lipid metabolism; glycerophospholipid metabolism.</text>
</comment>
<comment type="subcellular location">
    <subcellularLocation>
        <location evidence="1">Cytoplasm</location>
    </subcellularLocation>
</comment>
<comment type="similarity">
    <text evidence="1">Belongs to the NAD-dependent glycerol-3-phosphate dehydrogenase family.</text>
</comment>
<protein>
    <recommendedName>
        <fullName evidence="1">Glycerol-3-phosphate dehydrogenase [NAD(P)+]</fullName>
        <ecNumber evidence="1">1.1.1.94</ecNumber>
    </recommendedName>
    <alternativeName>
        <fullName evidence="1">NAD(P)(+)-dependent glycerol-3-phosphate dehydrogenase</fullName>
    </alternativeName>
    <alternativeName>
        <fullName evidence="1">NAD(P)H-dependent dihydroxyacetone-phosphate reductase</fullName>
    </alternativeName>
</protein>
<dbReference type="EC" id="1.1.1.94" evidence="1"/>
<dbReference type="EMBL" id="AP006716">
    <property type="protein sequence ID" value="BAE04746.1"/>
    <property type="molecule type" value="Genomic_DNA"/>
</dbReference>
<dbReference type="RefSeq" id="WP_011275732.1">
    <property type="nucleotide sequence ID" value="NC_007168.1"/>
</dbReference>
<dbReference type="SMR" id="Q4L6H9"/>
<dbReference type="KEGG" id="sha:SH1437"/>
<dbReference type="eggNOG" id="COG0240">
    <property type="taxonomic scope" value="Bacteria"/>
</dbReference>
<dbReference type="HOGENOM" id="CLU_033449_0_2_9"/>
<dbReference type="OrthoDB" id="9812273at2"/>
<dbReference type="UniPathway" id="UPA00940"/>
<dbReference type="Proteomes" id="UP000000543">
    <property type="component" value="Chromosome"/>
</dbReference>
<dbReference type="GO" id="GO:0005829">
    <property type="term" value="C:cytosol"/>
    <property type="evidence" value="ECO:0007669"/>
    <property type="project" value="TreeGrafter"/>
</dbReference>
<dbReference type="GO" id="GO:0047952">
    <property type="term" value="F:glycerol-3-phosphate dehydrogenase [NAD(P)+] activity"/>
    <property type="evidence" value="ECO:0007669"/>
    <property type="project" value="UniProtKB-UniRule"/>
</dbReference>
<dbReference type="GO" id="GO:0051287">
    <property type="term" value="F:NAD binding"/>
    <property type="evidence" value="ECO:0007669"/>
    <property type="project" value="InterPro"/>
</dbReference>
<dbReference type="GO" id="GO:0005975">
    <property type="term" value="P:carbohydrate metabolic process"/>
    <property type="evidence" value="ECO:0007669"/>
    <property type="project" value="InterPro"/>
</dbReference>
<dbReference type="GO" id="GO:0046167">
    <property type="term" value="P:glycerol-3-phosphate biosynthetic process"/>
    <property type="evidence" value="ECO:0007669"/>
    <property type="project" value="UniProtKB-UniRule"/>
</dbReference>
<dbReference type="GO" id="GO:0046168">
    <property type="term" value="P:glycerol-3-phosphate catabolic process"/>
    <property type="evidence" value="ECO:0007669"/>
    <property type="project" value="InterPro"/>
</dbReference>
<dbReference type="GO" id="GO:0006650">
    <property type="term" value="P:glycerophospholipid metabolic process"/>
    <property type="evidence" value="ECO:0007669"/>
    <property type="project" value="UniProtKB-UniRule"/>
</dbReference>
<dbReference type="GO" id="GO:0008654">
    <property type="term" value="P:phospholipid biosynthetic process"/>
    <property type="evidence" value="ECO:0007669"/>
    <property type="project" value="UniProtKB-KW"/>
</dbReference>
<dbReference type="FunFam" id="1.10.1040.10:FF:000001">
    <property type="entry name" value="Glycerol-3-phosphate dehydrogenase [NAD(P)+]"/>
    <property type="match status" value="1"/>
</dbReference>
<dbReference type="FunFam" id="3.40.50.720:FF:000019">
    <property type="entry name" value="Glycerol-3-phosphate dehydrogenase [NAD(P)+]"/>
    <property type="match status" value="1"/>
</dbReference>
<dbReference type="Gene3D" id="1.10.1040.10">
    <property type="entry name" value="N-(1-d-carboxylethyl)-l-norvaline Dehydrogenase, domain 2"/>
    <property type="match status" value="1"/>
</dbReference>
<dbReference type="Gene3D" id="3.40.50.720">
    <property type="entry name" value="NAD(P)-binding Rossmann-like Domain"/>
    <property type="match status" value="1"/>
</dbReference>
<dbReference type="HAMAP" id="MF_00394">
    <property type="entry name" value="NAD_Glyc3P_dehydrog"/>
    <property type="match status" value="1"/>
</dbReference>
<dbReference type="InterPro" id="IPR008927">
    <property type="entry name" value="6-PGluconate_DH-like_C_sf"/>
</dbReference>
<dbReference type="InterPro" id="IPR013328">
    <property type="entry name" value="6PGD_dom2"/>
</dbReference>
<dbReference type="InterPro" id="IPR006168">
    <property type="entry name" value="G3P_DH_NAD-dep"/>
</dbReference>
<dbReference type="InterPro" id="IPR006109">
    <property type="entry name" value="G3P_DH_NAD-dep_C"/>
</dbReference>
<dbReference type="InterPro" id="IPR011128">
    <property type="entry name" value="G3P_DH_NAD-dep_N"/>
</dbReference>
<dbReference type="InterPro" id="IPR036291">
    <property type="entry name" value="NAD(P)-bd_dom_sf"/>
</dbReference>
<dbReference type="NCBIfam" id="NF000940">
    <property type="entry name" value="PRK00094.1-2"/>
    <property type="match status" value="1"/>
</dbReference>
<dbReference type="NCBIfam" id="NF000941">
    <property type="entry name" value="PRK00094.1-3"/>
    <property type="match status" value="1"/>
</dbReference>
<dbReference type="NCBIfam" id="NF000942">
    <property type="entry name" value="PRK00094.1-4"/>
    <property type="match status" value="1"/>
</dbReference>
<dbReference type="PANTHER" id="PTHR11728">
    <property type="entry name" value="GLYCEROL-3-PHOSPHATE DEHYDROGENASE"/>
    <property type="match status" value="1"/>
</dbReference>
<dbReference type="PANTHER" id="PTHR11728:SF1">
    <property type="entry name" value="GLYCEROL-3-PHOSPHATE DEHYDROGENASE [NAD(+)] 2, CHLOROPLASTIC"/>
    <property type="match status" value="1"/>
</dbReference>
<dbReference type="Pfam" id="PF07479">
    <property type="entry name" value="NAD_Gly3P_dh_C"/>
    <property type="match status" value="1"/>
</dbReference>
<dbReference type="Pfam" id="PF01210">
    <property type="entry name" value="NAD_Gly3P_dh_N"/>
    <property type="match status" value="1"/>
</dbReference>
<dbReference type="PIRSF" id="PIRSF000114">
    <property type="entry name" value="Glycerol-3-P_dh"/>
    <property type="match status" value="1"/>
</dbReference>
<dbReference type="PRINTS" id="PR00077">
    <property type="entry name" value="GPDHDRGNASE"/>
</dbReference>
<dbReference type="SUPFAM" id="SSF48179">
    <property type="entry name" value="6-phosphogluconate dehydrogenase C-terminal domain-like"/>
    <property type="match status" value="1"/>
</dbReference>
<dbReference type="SUPFAM" id="SSF51735">
    <property type="entry name" value="NAD(P)-binding Rossmann-fold domains"/>
    <property type="match status" value="1"/>
</dbReference>
<dbReference type="PROSITE" id="PS00957">
    <property type="entry name" value="NAD_G3PDH"/>
    <property type="match status" value="1"/>
</dbReference>
<reference key="1">
    <citation type="journal article" date="2005" name="J. Bacteriol.">
        <title>Whole-genome sequencing of Staphylococcus haemolyticus uncovers the extreme plasticity of its genome and the evolution of human-colonizing staphylococcal species.</title>
        <authorList>
            <person name="Takeuchi F."/>
            <person name="Watanabe S."/>
            <person name="Baba T."/>
            <person name="Yuzawa H."/>
            <person name="Ito T."/>
            <person name="Morimoto Y."/>
            <person name="Kuroda M."/>
            <person name="Cui L."/>
            <person name="Takahashi M."/>
            <person name="Ankai A."/>
            <person name="Baba S."/>
            <person name="Fukui S."/>
            <person name="Lee J.C."/>
            <person name="Hiramatsu K."/>
        </authorList>
    </citation>
    <scope>NUCLEOTIDE SEQUENCE [LARGE SCALE GENOMIC DNA]</scope>
    <source>
        <strain>JCSC1435</strain>
    </source>
</reference>
<accession>Q4L6H9</accession>
<proteinExistence type="inferred from homology"/>
<name>GPDA_STAHJ</name>